<protein>
    <recommendedName>
        <fullName evidence="1">NAD(P)H-quinone oxidoreductase subunit I, chloroplastic</fullName>
        <ecNumber evidence="1">7.1.1.-</ecNumber>
    </recommendedName>
    <alternativeName>
        <fullName evidence="1">NAD(P)H dehydrogenase subunit I</fullName>
        <shortName evidence="1">NDH subunit I</shortName>
    </alternativeName>
    <alternativeName>
        <fullName evidence="1">NADH-plastoquinone oxidoreductase subunit I</fullName>
    </alternativeName>
</protein>
<comment type="function">
    <text evidence="1">NDH shuttles electrons from NAD(P)H:plastoquinone, via FMN and iron-sulfur (Fe-S) centers, to quinones in the photosynthetic chain and possibly in a chloroplast respiratory chain. The immediate electron acceptor for the enzyme in this species is believed to be plastoquinone. Couples the redox reaction to proton translocation, and thus conserves the redox energy in a proton gradient.</text>
</comment>
<comment type="catalytic activity">
    <reaction evidence="1">
        <text>a plastoquinone + NADH + (n+1) H(+)(in) = a plastoquinol + NAD(+) + n H(+)(out)</text>
        <dbReference type="Rhea" id="RHEA:42608"/>
        <dbReference type="Rhea" id="RHEA-COMP:9561"/>
        <dbReference type="Rhea" id="RHEA-COMP:9562"/>
        <dbReference type="ChEBI" id="CHEBI:15378"/>
        <dbReference type="ChEBI" id="CHEBI:17757"/>
        <dbReference type="ChEBI" id="CHEBI:57540"/>
        <dbReference type="ChEBI" id="CHEBI:57945"/>
        <dbReference type="ChEBI" id="CHEBI:62192"/>
    </reaction>
</comment>
<comment type="catalytic activity">
    <reaction evidence="1">
        <text>a plastoquinone + NADPH + (n+1) H(+)(in) = a plastoquinol + NADP(+) + n H(+)(out)</text>
        <dbReference type="Rhea" id="RHEA:42612"/>
        <dbReference type="Rhea" id="RHEA-COMP:9561"/>
        <dbReference type="Rhea" id="RHEA-COMP:9562"/>
        <dbReference type="ChEBI" id="CHEBI:15378"/>
        <dbReference type="ChEBI" id="CHEBI:17757"/>
        <dbReference type="ChEBI" id="CHEBI:57783"/>
        <dbReference type="ChEBI" id="CHEBI:58349"/>
        <dbReference type="ChEBI" id="CHEBI:62192"/>
    </reaction>
</comment>
<comment type="cofactor">
    <cofactor evidence="1">
        <name>[4Fe-4S] cluster</name>
        <dbReference type="ChEBI" id="CHEBI:49883"/>
    </cofactor>
    <text evidence="1">Binds 2 [4Fe-4S] clusters per subunit.</text>
</comment>
<comment type="subunit">
    <text evidence="1">NDH is composed of at least 16 different subunits, 5 of which are encoded in the nucleus.</text>
</comment>
<comment type="subcellular location">
    <subcellularLocation>
        <location evidence="1">Plastid</location>
        <location evidence="1">Chloroplast thylakoid membrane</location>
        <topology evidence="1">Peripheral membrane protein</topology>
    </subcellularLocation>
</comment>
<comment type="similarity">
    <text evidence="1">Belongs to the complex I 23 kDa subunit family.</text>
</comment>
<gene>
    <name evidence="1" type="primary">ndhI</name>
</gene>
<accession>O98692</accession>
<accession>A1E9P4</accession>
<dbReference type="EC" id="7.1.1.-" evidence="1"/>
<dbReference type="EMBL" id="AJ011848">
    <property type="protein sequence ID" value="CAA09813.1"/>
    <property type="molecule type" value="Genomic_DNA"/>
</dbReference>
<dbReference type="EMBL" id="EF115541">
    <property type="protein sequence ID" value="ABK79466.1"/>
    <property type="molecule type" value="Genomic_DNA"/>
</dbReference>
<dbReference type="RefSeq" id="YP_010144479.1">
    <property type="nucleotide sequence ID" value="NC_056985.1"/>
</dbReference>
<dbReference type="RefSeq" id="YP_874706.1">
    <property type="nucleotide sequence ID" value="NC_008590.1"/>
</dbReference>
<dbReference type="PDB" id="7EU3">
    <property type="method" value="EM"/>
    <property type="resolution" value="3.70 A"/>
    <property type="chains" value="I=3-167"/>
</dbReference>
<dbReference type="PDBsum" id="7EU3"/>
<dbReference type="SMR" id="O98692"/>
<dbReference type="GeneID" id="4525171"/>
<dbReference type="GeneID" id="67140635"/>
<dbReference type="OMA" id="PVVDWVM"/>
<dbReference type="GO" id="GO:0009535">
    <property type="term" value="C:chloroplast thylakoid membrane"/>
    <property type="evidence" value="ECO:0007669"/>
    <property type="project" value="UniProtKB-SubCell"/>
</dbReference>
<dbReference type="GO" id="GO:0051539">
    <property type="term" value="F:4 iron, 4 sulfur cluster binding"/>
    <property type="evidence" value="ECO:0007669"/>
    <property type="project" value="UniProtKB-KW"/>
</dbReference>
<dbReference type="GO" id="GO:0005506">
    <property type="term" value="F:iron ion binding"/>
    <property type="evidence" value="ECO:0007669"/>
    <property type="project" value="UniProtKB-UniRule"/>
</dbReference>
<dbReference type="GO" id="GO:0008137">
    <property type="term" value="F:NADH dehydrogenase (ubiquinone) activity"/>
    <property type="evidence" value="ECO:0007669"/>
    <property type="project" value="InterPro"/>
</dbReference>
<dbReference type="GO" id="GO:0048038">
    <property type="term" value="F:quinone binding"/>
    <property type="evidence" value="ECO:0007669"/>
    <property type="project" value="UniProtKB-KW"/>
</dbReference>
<dbReference type="GO" id="GO:0019684">
    <property type="term" value="P:photosynthesis, light reaction"/>
    <property type="evidence" value="ECO:0007669"/>
    <property type="project" value="UniProtKB-UniRule"/>
</dbReference>
<dbReference type="Gene3D" id="3.30.70.3270">
    <property type="match status" value="1"/>
</dbReference>
<dbReference type="HAMAP" id="MF_01351">
    <property type="entry name" value="NDH1_NuoI"/>
    <property type="match status" value="1"/>
</dbReference>
<dbReference type="InterPro" id="IPR017896">
    <property type="entry name" value="4Fe4S_Fe-S-bd"/>
</dbReference>
<dbReference type="InterPro" id="IPR017900">
    <property type="entry name" value="4Fe4S_Fe_S_CS"/>
</dbReference>
<dbReference type="InterPro" id="IPR010226">
    <property type="entry name" value="NADH_quinone_OxRdtase_chainI"/>
</dbReference>
<dbReference type="InterPro" id="IPR004497">
    <property type="entry name" value="NDHI"/>
</dbReference>
<dbReference type="NCBIfam" id="TIGR00403">
    <property type="entry name" value="ndhI"/>
    <property type="match status" value="1"/>
</dbReference>
<dbReference type="NCBIfam" id="TIGR01971">
    <property type="entry name" value="NuoI"/>
    <property type="match status" value="1"/>
</dbReference>
<dbReference type="NCBIfam" id="NF004537">
    <property type="entry name" value="PRK05888.1-3"/>
    <property type="match status" value="1"/>
</dbReference>
<dbReference type="PANTHER" id="PTHR47275">
    <property type="entry name" value="NAD(P)H-QUINONE OXIDOREDUCTASE SUBUNIT I, CHLOROPLASTIC"/>
    <property type="match status" value="1"/>
</dbReference>
<dbReference type="PANTHER" id="PTHR47275:SF3">
    <property type="entry name" value="NAD(P)H-QUINONE OXIDOREDUCTASE SUBUNIT I, CHLOROPLASTIC"/>
    <property type="match status" value="1"/>
</dbReference>
<dbReference type="Pfam" id="PF12838">
    <property type="entry name" value="Fer4_7"/>
    <property type="match status" value="1"/>
</dbReference>
<dbReference type="SUPFAM" id="SSF54862">
    <property type="entry name" value="4Fe-4S ferredoxins"/>
    <property type="match status" value="1"/>
</dbReference>
<dbReference type="PROSITE" id="PS00198">
    <property type="entry name" value="4FE4S_FER_1"/>
    <property type="match status" value="2"/>
</dbReference>
<dbReference type="PROSITE" id="PS51379">
    <property type="entry name" value="4FE4S_FER_2"/>
    <property type="match status" value="2"/>
</dbReference>
<evidence type="ECO:0000255" key="1">
    <source>
        <dbReference type="HAMAP-Rule" id="MF_01351"/>
    </source>
</evidence>
<evidence type="ECO:0000305" key="2"/>
<organism>
    <name type="scientific">Hordeum vulgare</name>
    <name type="common">Barley</name>
    <dbReference type="NCBI Taxonomy" id="4513"/>
    <lineage>
        <taxon>Eukaryota</taxon>
        <taxon>Viridiplantae</taxon>
        <taxon>Streptophyta</taxon>
        <taxon>Embryophyta</taxon>
        <taxon>Tracheophyta</taxon>
        <taxon>Spermatophyta</taxon>
        <taxon>Magnoliopsida</taxon>
        <taxon>Liliopsida</taxon>
        <taxon>Poales</taxon>
        <taxon>Poaceae</taxon>
        <taxon>BOP clade</taxon>
        <taxon>Pooideae</taxon>
        <taxon>Triticodae</taxon>
        <taxon>Triticeae</taxon>
        <taxon>Hordeinae</taxon>
        <taxon>Hordeum</taxon>
    </lineage>
</organism>
<reference key="1">
    <citation type="journal article" date="2000" name="Nucleic Acids Res.">
        <title>Transcripts of the ndhH-D operon of barley plastids: possible role of unedited site III in splicing of the ndhA intron.</title>
        <authorList>
            <person name="del Campo E.M."/>
            <person name="Sabater B."/>
            <person name="Martin M."/>
        </authorList>
    </citation>
    <scope>NUCLEOTIDE SEQUENCE [GENOMIC DNA]</scope>
    <source>
        <strain>cv. Hassan</strain>
        <tissue>Leaf</tissue>
    </source>
</reference>
<reference key="2">
    <citation type="journal article" date="2007" name="Theor. Appl. Genet.">
        <title>Complete chloroplast genome sequences of Hordeum vulgare, Sorghum bicolor and Agrostis stolonifera, and comparative analyses with other grass genomes.</title>
        <authorList>
            <person name="Saski C."/>
            <person name="Lee S.-B."/>
            <person name="Fjellheim S."/>
            <person name="Guda C."/>
            <person name="Jansen R.K."/>
            <person name="Luo H."/>
            <person name="Tomkins J."/>
            <person name="Rognli O.A."/>
            <person name="Daniell H."/>
            <person name="Clarke J.L."/>
        </authorList>
    </citation>
    <scope>NUCLEOTIDE SEQUENCE [LARGE SCALE GENOMIC DNA]</scope>
    <source>
        <strain>cv. Morex</strain>
    </source>
</reference>
<proteinExistence type="evidence at protein level"/>
<feature type="chain" id="PRO_0000245661" description="NAD(P)H-quinone oxidoreductase subunit I, chloroplastic">
    <location>
        <begin position="1"/>
        <end position="180"/>
    </location>
</feature>
<feature type="domain" description="4Fe-4S ferredoxin-type 1" evidence="1">
    <location>
        <begin position="55"/>
        <end position="84"/>
    </location>
</feature>
<feature type="domain" description="4Fe-4S ferredoxin-type 2" evidence="1">
    <location>
        <begin position="95"/>
        <end position="124"/>
    </location>
</feature>
<feature type="binding site" evidence="1">
    <location>
        <position position="64"/>
    </location>
    <ligand>
        <name>[4Fe-4S] cluster</name>
        <dbReference type="ChEBI" id="CHEBI:49883"/>
        <label>1</label>
    </ligand>
</feature>
<feature type="binding site" evidence="1">
    <location>
        <position position="67"/>
    </location>
    <ligand>
        <name>[4Fe-4S] cluster</name>
        <dbReference type="ChEBI" id="CHEBI:49883"/>
        <label>1</label>
    </ligand>
</feature>
<feature type="binding site" evidence="1">
    <location>
        <position position="70"/>
    </location>
    <ligand>
        <name>[4Fe-4S] cluster</name>
        <dbReference type="ChEBI" id="CHEBI:49883"/>
        <label>1</label>
    </ligand>
</feature>
<feature type="binding site" evidence="1">
    <location>
        <position position="74"/>
    </location>
    <ligand>
        <name>[4Fe-4S] cluster</name>
        <dbReference type="ChEBI" id="CHEBI:49883"/>
        <label>2</label>
    </ligand>
</feature>
<feature type="binding site" evidence="1">
    <location>
        <position position="104"/>
    </location>
    <ligand>
        <name>[4Fe-4S] cluster</name>
        <dbReference type="ChEBI" id="CHEBI:49883"/>
        <label>2</label>
    </ligand>
</feature>
<feature type="binding site" evidence="1">
    <location>
        <position position="107"/>
    </location>
    <ligand>
        <name>[4Fe-4S] cluster</name>
        <dbReference type="ChEBI" id="CHEBI:49883"/>
        <label>2</label>
    </ligand>
</feature>
<feature type="binding site" evidence="1">
    <location>
        <position position="110"/>
    </location>
    <ligand>
        <name>[4Fe-4S] cluster</name>
        <dbReference type="ChEBI" id="CHEBI:49883"/>
        <label>2</label>
    </ligand>
</feature>
<feature type="binding site" evidence="1">
    <location>
        <position position="114"/>
    </location>
    <ligand>
        <name>[4Fe-4S] cluster</name>
        <dbReference type="ChEBI" id="CHEBI:49883"/>
        <label>1</label>
    </ligand>
</feature>
<feature type="sequence conflict" description="In Ref. 1; CAA09813." evidence="2" ref="1">
    <original>T</original>
    <variation>S</variation>
    <location>
        <position position="6"/>
    </location>
</feature>
<name>NDHI_HORVU</name>
<keyword id="KW-0002">3D-structure</keyword>
<keyword id="KW-0004">4Fe-4S</keyword>
<keyword id="KW-0150">Chloroplast</keyword>
<keyword id="KW-0408">Iron</keyword>
<keyword id="KW-0411">Iron-sulfur</keyword>
<keyword id="KW-0472">Membrane</keyword>
<keyword id="KW-0479">Metal-binding</keyword>
<keyword id="KW-0520">NAD</keyword>
<keyword id="KW-0521">NADP</keyword>
<keyword id="KW-0934">Plastid</keyword>
<keyword id="KW-0618">Plastoquinone</keyword>
<keyword id="KW-0874">Quinone</keyword>
<keyword id="KW-0677">Repeat</keyword>
<keyword id="KW-0793">Thylakoid</keyword>
<keyword id="KW-1278">Translocase</keyword>
<sequence length="180" mass="21039">MFPMVTGFMSYGQQTIRATRYIGQSFITTLSHTNRLPITIHYPYEKSITPERFRGRIHFEFDKCIACEVCVRVCPIDLPVVDWRFEKDIKRKQLLNYSIDFGVCIFCGNCVEYCPTSCLSMTEEYELSTYDRHELNYNQIALSRLPISIMGDYTIQTIRNSSESKINEEKSSNSRTITDY</sequence>
<geneLocation type="chloroplast"/>